<comment type="function">
    <text evidence="5">Transcription factor that binds to the VHRE consensus sequence in promoters of VHT1 and BIO5, and regulates their biotin-dependent expression.</text>
</comment>
<comment type="subcellular location">
    <subcellularLocation>
        <location evidence="2">Cytoplasm</location>
    </subcellularLocation>
    <subcellularLocation>
        <location evidence="2 5">Nucleus</location>
    </subcellularLocation>
</comment>
<comment type="induction">
    <text evidence="4">By stress, probably through the induction by the transcription factor PDR1.</text>
</comment>
<comment type="miscellaneous">
    <text evidence="3">Present with 279 molecules/cell in log phase SD medium.</text>
</comment>
<comment type="similarity">
    <text evidence="6">Belongs to the VHR1 family.</text>
</comment>
<accession>P40522</accession>
<accession>D6VVM6</accession>
<keyword id="KW-0963">Cytoplasm</keyword>
<keyword id="KW-0238">DNA-binding</keyword>
<keyword id="KW-0539">Nucleus</keyword>
<keyword id="KW-0597">Phosphoprotein</keyword>
<keyword id="KW-1185">Reference proteome</keyword>
<keyword id="KW-0804">Transcription</keyword>
<keyword id="KW-0805">Transcription regulation</keyword>
<gene>
    <name type="primary">VHR1</name>
    <name type="ordered locus">YIL056W</name>
</gene>
<sequence>MNGPPTFTQYRINKFSGNGATHKIRELLNFNDEKKWKQFSSRRLELIDKFQLSQYKASEQDQNIKQIATILRTEFGYPVSCSKEFEKLVTAAVQSVRRNRKRSKKRYALSIANGSGGNVNNSISSNSTSDDEISPSIYQRSNSDFLPSSNYAADFQFSNKFQPLMSHQSHNGTIFPTVGTQNDSSPSVTSTQQKYNDIVTMLVHDLVTNVVPLSEQALKDPYTGPNLSHFATSSLSQQPNITTNIPIDSTVPFFLREKLLLQIQRSRTCQDISQAAGSIDIYANLEILGEMSIRMSIAFVIERFFSNLVSSSMKYITAKTCSPENLALLSQRLFGAATRHNLSHFPAAQVQLRLLYLVIGGIVKDFGFDPTLYPLSEIIHHIVMVQYPLASSCASEPPSSSPNKRVKRSPPVVSSDVMLNNNNTLSNRATLLTTLPMKPQSANKDVNRRVIIRFNDREQAFTFHQLSNGPPTVSEVLENCKNLFNIINKNKNFGIFHNDNLLNDESLAKLFDSFSTSEIHLVIKDISTIPLQDAKIPVPITLPKMSCIGENPSMPSIPLVPQEKDDPKKSSLTAFDNILNRISKSPMNEENSNTTLNTGTSTSNTNNNDHNESVPAPYVTKNKNSFQNGNLPQPVFQPLL</sequence>
<protein>
    <recommendedName>
        <fullName>Transcription factor VHR1</fullName>
    </recommendedName>
    <alternativeName>
        <fullName>VHT1 regulator 1</fullName>
    </alternativeName>
</protein>
<reference key="1">
    <citation type="journal article" date="1997" name="Nature">
        <title>The nucleotide sequence of Saccharomyces cerevisiae chromosome IX.</title>
        <authorList>
            <person name="Churcher C.M."/>
            <person name="Bowman S."/>
            <person name="Badcock K."/>
            <person name="Bankier A.T."/>
            <person name="Brown D."/>
            <person name="Chillingworth T."/>
            <person name="Connor R."/>
            <person name="Devlin K."/>
            <person name="Gentles S."/>
            <person name="Hamlin N."/>
            <person name="Harris D.E."/>
            <person name="Horsnell T."/>
            <person name="Hunt S."/>
            <person name="Jagels K."/>
            <person name="Jones M."/>
            <person name="Lye G."/>
            <person name="Moule S."/>
            <person name="Odell C."/>
            <person name="Pearson D."/>
            <person name="Rajandream M.A."/>
            <person name="Rice P."/>
            <person name="Rowley N."/>
            <person name="Skelton J."/>
            <person name="Smith V."/>
            <person name="Walsh S.V."/>
            <person name="Whitehead S."/>
            <person name="Barrell B.G."/>
        </authorList>
    </citation>
    <scope>NUCLEOTIDE SEQUENCE [LARGE SCALE GENOMIC DNA]</scope>
    <source>
        <strain>ATCC 204508 / S288c</strain>
    </source>
</reference>
<reference key="2">
    <citation type="journal article" date="2014" name="G3 (Bethesda)">
        <title>The reference genome sequence of Saccharomyces cerevisiae: Then and now.</title>
        <authorList>
            <person name="Engel S.R."/>
            <person name="Dietrich F.S."/>
            <person name="Fisk D.G."/>
            <person name="Binkley G."/>
            <person name="Balakrishnan R."/>
            <person name="Costanzo M.C."/>
            <person name="Dwight S.S."/>
            <person name="Hitz B.C."/>
            <person name="Karra K."/>
            <person name="Nash R.S."/>
            <person name="Weng S."/>
            <person name="Wong E.D."/>
            <person name="Lloyd P."/>
            <person name="Skrzypek M.S."/>
            <person name="Miyasato S.R."/>
            <person name="Simison M."/>
            <person name="Cherry J.M."/>
        </authorList>
    </citation>
    <scope>GENOME REANNOTATION</scope>
    <source>
        <strain>ATCC 204508 / S288c</strain>
    </source>
</reference>
<reference key="3">
    <citation type="journal article" date="2003" name="Nature">
        <title>Global analysis of protein localization in budding yeast.</title>
        <authorList>
            <person name="Huh W.-K."/>
            <person name="Falvo J.V."/>
            <person name="Gerke L.C."/>
            <person name="Carroll A.S."/>
            <person name="Howson R.W."/>
            <person name="Weissman J.S."/>
            <person name="O'Shea E.K."/>
        </authorList>
    </citation>
    <scope>SUBCELLULAR LOCATION [LARGE SCALE ANALYSIS]</scope>
</reference>
<reference key="4">
    <citation type="journal article" date="2003" name="Nature">
        <title>Global analysis of protein expression in yeast.</title>
        <authorList>
            <person name="Ghaemmaghami S."/>
            <person name="Huh W.-K."/>
            <person name="Bower K."/>
            <person name="Howson R.W."/>
            <person name="Belle A."/>
            <person name="Dephoure N."/>
            <person name="O'Shea E.K."/>
            <person name="Weissman J.S."/>
        </authorList>
    </citation>
    <scope>LEVEL OF PROTEIN EXPRESSION [LARGE SCALE ANALYSIS]</scope>
</reference>
<reference key="5">
    <citation type="journal article" date="2005" name="Mol. Cell. Biol.">
        <title>Early expression of yeast genes affected by chemical stress.</title>
        <authorList>
            <person name="Lucau-Danila A."/>
            <person name="Lelandais G."/>
            <person name="Kozovska Z."/>
            <person name="Tanty V."/>
            <person name="Delaveau T."/>
            <person name="Devaux F."/>
            <person name="Jacq C."/>
        </authorList>
    </citation>
    <scope>INDUCTION</scope>
</reference>
<reference key="6">
    <citation type="journal article" date="2006" name="J. Biol. Chem.">
        <title>Vhr1p, a new transcription factor from budding yeast, regulates biotin-dependent expression of VHT1 and BIO5.</title>
        <authorList>
            <person name="Weider M."/>
            <person name="Machnik A."/>
            <person name="Klebl F."/>
            <person name="Sauer N."/>
        </authorList>
    </citation>
    <scope>FUNCTION</scope>
    <scope>SUBCELLULAR LOCATION</scope>
</reference>
<reference key="7">
    <citation type="journal article" date="2007" name="J. Proteome Res.">
        <title>Large-scale phosphorylation analysis of alpha-factor-arrested Saccharomyces cerevisiae.</title>
        <authorList>
            <person name="Li X."/>
            <person name="Gerber S.A."/>
            <person name="Rudner A.D."/>
            <person name="Beausoleil S.A."/>
            <person name="Haas W."/>
            <person name="Villen J."/>
            <person name="Elias J.E."/>
            <person name="Gygi S.P."/>
        </authorList>
    </citation>
    <scope>PHOSPHORYLATION [LARGE SCALE ANALYSIS] AT SER-409</scope>
    <scope>IDENTIFICATION BY MASS SPECTROMETRY [LARGE SCALE ANALYSIS]</scope>
    <source>
        <strain>ADR376</strain>
    </source>
</reference>
<reference key="8">
    <citation type="journal article" date="2009" name="Science">
        <title>Global analysis of Cdk1 substrate phosphorylation sites provides insights into evolution.</title>
        <authorList>
            <person name="Holt L.J."/>
            <person name="Tuch B.B."/>
            <person name="Villen J."/>
            <person name="Johnson A.D."/>
            <person name="Gygi S.P."/>
            <person name="Morgan D.O."/>
        </authorList>
    </citation>
    <scope>PHOSPHORYLATION [LARGE SCALE ANALYSIS] AT SER-409</scope>
    <scope>IDENTIFICATION BY MASS SPECTROMETRY [LARGE SCALE ANALYSIS]</scope>
</reference>
<organism>
    <name type="scientific">Saccharomyces cerevisiae (strain ATCC 204508 / S288c)</name>
    <name type="common">Baker's yeast</name>
    <dbReference type="NCBI Taxonomy" id="559292"/>
    <lineage>
        <taxon>Eukaryota</taxon>
        <taxon>Fungi</taxon>
        <taxon>Dikarya</taxon>
        <taxon>Ascomycota</taxon>
        <taxon>Saccharomycotina</taxon>
        <taxon>Saccharomycetes</taxon>
        <taxon>Saccharomycetales</taxon>
        <taxon>Saccharomycetaceae</taxon>
        <taxon>Saccharomyces</taxon>
    </lineage>
</organism>
<dbReference type="EMBL" id="Z38060">
    <property type="protein sequence ID" value="CAA86175.1"/>
    <property type="molecule type" value="Genomic_DNA"/>
</dbReference>
<dbReference type="EMBL" id="BK006942">
    <property type="protein sequence ID" value="DAA08492.1"/>
    <property type="molecule type" value="Genomic_DNA"/>
</dbReference>
<dbReference type="PIR" id="S48423">
    <property type="entry name" value="S48423"/>
</dbReference>
<dbReference type="RefSeq" id="NP_012208.1">
    <property type="nucleotide sequence ID" value="NM_001179406.1"/>
</dbReference>
<dbReference type="SMR" id="P40522"/>
<dbReference type="BioGRID" id="34935">
    <property type="interactions" value="72"/>
</dbReference>
<dbReference type="DIP" id="DIP-5411N"/>
<dbReference type="FunCoup" id="P40522">
    <property type="interactions" value="231"/>
</dbReference>
<dbReference type="IntAct" id="P40522">
    <property type="interactions" value="10"/>
</dbReference>
<dbReference type="MINT" id="P40522"/>
<dbReference type="STRING" id="4932.YIL056W"/>
<dbReference type="GlyGen" id="P40522">
    <property type="glycosylation" value="1 site"/>
</dbReference>
<dbReference type="iPTMnet" id="P40522"/>
<dbReference type="PaxDb" id="4932-YIL056W"/>
<dbReference type="PeptideAtlas" id="P40522"/>
<dbReference type="EnsemblFungi" id="YIL056W_mRNA">
    <property type="protein sequence ID" value="YIL056W"/>
    <property type="gene ID" value="YIL056W"/>
</dbReference>
<dbReference type="GeneID" id="854755"/>
<dbReference type="KEGG" id="sce:YIL056W"/>
<dbReference type="AGR" id="SGD:S000001318"/>
<dbReference type="SGD" id="S000001318">
    <property type="gene designation" value="VHR1"/>
</dbReference>
<dbReference type="VEuPathDB" id="FungiDB:YIL056W"/>
<dbReference type="eggNOG" id="ENOG502QVE1">
    <property type="taxonomic scope" value="Eukaryota"/>
</dbReference>
<dbReference type="GeneTree" id="ENSGT00940000176700"/>
<dbReference type="HOGENOM" id="CLU_006698_0_0_1"/>
<dbReference type="InParanoid" id="P40522"/>
<dbReference type="OMA" id="FVMERFF"/>
<dbReference type="OrthoDB" id="4089008at2759"/>
<dbReference type="BioCyc" id="YEAST:G3O-31326-MONOMER"/>
<dbReference type="BioGRID-ORCS" id="854755">
    <property type="hits" value="2 hits in 13 CRISPR screens"/>
</dbReference>
<dbReference type="PRO" id="PR:P40522"/>
<dbReference type="Proteomes" id="UP000002311">
    <property type="component" value="Chromosome IX"/>
</dbReference>
<dbReference type="RNAct" id="P40522">
    <property type="molecule type" value="protein"/>
</dbReference>
<dbReference type="GO" id="GO:0005737">
    <property type="term" value="C:cytoplasm"/>
    <property type="evidence" value="ECO:0007005"/>
    <property type="project" value="SGD"/>
</dbReference>
<dbReference type="GO" id="GO:0005634">
    <property type="term" value="C:nucleus"/>
    <property type="evidence" value="ECO:0000314"/>
    <property type="project" value="SGD"/>
</dbReference>
<dbReference type="GO" id="GO:0000981">
    <property type="term" value="F:DNA-binding transcription factor activity, RNA polymerase II-specific"/>
    <property type="evidence" value="ECO:0000314"/>
    <property type="project" value="SGD"/>
</dbReference>
<dbReference type="GO" id="GO:0000977">
    <property type="term" value="F:RNA polymerase II transcription regulatory region sequence-specific DNA binding"/>
    <property type="evidence" value="ECO:0000314"/>
    <property type="project" value="SGD"/>
</dbReference>
<dbReference type="GO" id="GO:1990383">
    <property type="term" value="P:cellular response to biotin starvation"/>
    <property type="evidence" value="ECO:0000315"/>
    <property type="project" value="SGD"/>
</dbReference>
<dbReference type="GO" id="GO:0045944">
    <property type="term" value="P:positive regulation of transcription by RNA polymerase II"/>
    <property type="evidence" value="ECO:0000315"/>
    <property type="project" value="SGD"/>
</dbReference>
<dbReference type="GO" id="GO:0006357">
    <property type="term" value="P:regulation of transcription by RNA polymerase II"/>
    <property type="evidence" value="ECO:0000315"/>
    <property type="project" value="SGD"/>
</dbReference>
<dbReference type="InterPro" id="IPR007147">
    <property type="entry name" value="TF_Vhr"/>
</dbReference>
<dbReference type="Pfam" id="PF04001">
    <property type="entry name" value="Vhr1"/>
    <property type="match status" value="1"/>
</dbReference>
<proteinExistence type="evidence at protein level"/>
<feature type="chain" id="PRO_0000202988" description="Transcription factor VHR1">
    <location>
        <begin position="1"/>
        <end position="640"/>
    </location>
</feature>
<feature type="region of interest" description="Disordered" evidence="1">
    <location>
        <begin position="118"/>
        <end position="139"/>
    </location>
</feature>
<feature type="region of interest" description="Disordered" evidence="1">
    <location>
        <begin position="580"/>
        <end position="640"/>
    </location>
</feature>
<feature type="compositionally biased region" description="Low complexity" evidence="1">
    <location>
        <begin position="118"/>
        <end position="128"/>
    </location>
</feature>
<feature type="compositionally biased region" description="Low complexity" evidence="1">
    <location>
        <begin position="588"/>
        <end position="608"/>
    </location>
</feature>
<feature type="compositionally biased region" description="Polar residues" evidence="1">
    <location>
        <begin position="621"/>
        <end position="631"/>
    </location>
</feature>
<feature type="modified residue" description="Phosphoserine" evidence="7 8">
    <location>
        <position position="409"/>
    </location>
</feature>
<evidence type="ECO:0000256" key="1">
    <source>
        <dbReference type="SAM" id="MobiDB-lite"/>
    </source>
</evidence>
<evidence type="ECO:0000269" key="2">
    <source>
    </source>
</evidence>
<evidence type="ECO:0000269" key="3">
    <source>
    </source>
</evidence>
<evidence type="ECO:0000269" key="4">
    <source>
    </source>
</evidence>
<evidence type="ECO:0000269" key="5">
    <source>
    </source>
</evidence>
<evidence type="ECO:0000305" key="6"/>
<evidence type="ECO:0007744" key="7">
    <source>
    </source>
</evidence>
<evidence type="ECO:0007744" key="8">
    <source>
    </source>
</evidence>
<name>VHR1_YEAST</name>